<comment type="function">
    <text>Disease resistance protein.</text>
</comment>
<comment type="domain">
    <text evidence="1">The LRR repeats probably act as specificity determinant of pathogen recognition.</text>
</comment>
<comment type="similarity">
    <text evidence="3">Belongs to the disease resistance NB-LRR family. RPP8/HRT subfamily.</text>
</comment>
<comment type="sequence caution" evidence="3">
    <conflict type="frameshift">
        <sequence resource="EMBL-CDS" id="AAC14261"/>
    </conflict>
</comment>
<comment type="online information" name="NIB-LRRS">
    <link uri="http://niblrrs.ucdavis.edu"/>
    <text>Functional and comparative genomics of disease resistance gene homologs</text>
</comment>
<name>RP8L3_ARATH</name>
<organism>
    <name type="scientific">Arabidopsis thaliana</name>
    <name type="common">Mouse-ear cress</name>
    <dbReference type="NCBI Taxonomy" id="3702"/>
    <lineage>
        <taxon>Eukaryota</taxon>
        <taxon>Viridiplantae</taxon>
        <taxon>Streptophyta</taxon>
        <taxon>Embryophyta</taxon>
        <taxon>Tracheophyta</taxon>
        <taxon>Spermatophyta</taxon>
        <taxon>Magnoliopsida</taxon>
        <taxon>eudicotyledons</taxon>
        <taxon>Gunneridae</taxon>
        <taxon>Pentapetalae</taxon>
        <taxon>rosids</taxon>
        <taxon>malvids</taxon>
        <taxon>Brassicales</taxon>
        <taxon>Brassicaceae</taxon>
        <taxon>Camelineae</taxon>
        <taxon>Arabidopsis</taxon>
    </lineage>
</organism>
<keyword id="KW-0067">ATP-binding</keyword>
<keyword id="KW-0175">Coiled coil</keyword>
<keyword id="KW-0433">Leucine-rich repeat</keyword>
<keyword id="KW-0547">Nucleotide-binding</keyword>
<keyword id="KW-0611">Plant defense</keyword>
<keyword id="KW-1185">Reference proteome</keyword>
<keyword id="KW-0677">Repeat</keyword>
<reference key="1">
    <citation type="journal article" date="1998" name="DNA Res.">
        <title>Structural analysis of Arabidopsis thaliana chromosome 5. VII. Sequence features of the regions of 1,013,767 bp covered by sixteen physically assigned P1 and TAC clones.</title>
        <authorList>
            <person name="Nakamura Y."/>
            <person name="Sato S."/>
            <person name="Asamizu E."/>
            <person name="Kaneko T."/>
            <person name="Kotani H."/>
            <person name="Miyajima N."/>
            <person name="Tabata S."/>
        </authorList>
    </citation>
    <scope>NUCLEOTIDE SEQUENCE [LARGE SCALE GENOMIC DNA]</scope>
    <source>
        <strain>cv. Columbia</strain>
    </source>
</reference>
<reference key="2">
    <citation type="journal article" date="2017" name="Plant J.">
        <title>Araport11: a complete reannotation of the Arabidopsis thaliana reference genome.</title>
        <authorList>
            <person name="Cheng C.Y."/>
            <person name="Krishnakumar V."/>
            <person name="Chan A.P."/>
            <person name="Thibaud-Nissen F."/>
            <person name="Schobel S."/>
            <person name="Town C.D."/>
        </authorList>
    </citation>
    <scope>GENOME REANNOTATION</scope>
    <source>
        <strain>cv. Columbia</strain>
    </source>
</reference>
<reference key="3">
    <citation type="submission" date="2006-07" db="EMBL/GenBank/DDBJ databases">
        <title>Large-scale analysis of RIKEN Arabidopsis full-length (RAFL) cDNAs.</title>
        <authorList>
            <person name="Totoki Y."/>
            <person name="Seki M."/>
            <person name="Ishida J."/>
            <person name="Nakajima M."/>
            <person name="Enju A."/>
            <person name="Kamiya A."/>
            <person name="Narusaka M."/>
            <person name="Shin-i T."/>
            <person name="Nakagawa M."/>
            <person name="Sakamoto N."/>
            <person name="Oishi K."/>
            <person name="Kohara Y."/>
            <person name="Kobayashi M."/>
            <person name="Toyoda A."/>
            <person name="Sakaki Y."/>
            <person name="Sakurai T."/>
            <person name="Iida K."/>
            <person name="Akiyama K."/>
            <person name="Satou M."/>
            <person name="Toyoda T."/>
            <person name="Konagaya A."/>
            <person name="Carninci P."/>
            <person name="Kawai J."/>
            <person name="Hayashizaki Y."/>
            <person name="Shinozaki K."/>
        </authorList>
    </citation>
    <scope>NUCLEOTIDE SEQUENCE [LARGE SCALE MRNA]</scope>
    <source>
        <strain>cv. Columbia</strain>
    </source>
</reference>
<reference key="4">
    <citation type="journal article" date="1998" name="Mol. Plant Microbe Interact.">
        <title>Identification of R-gene homologous DNA fragments genetically linked to disease resistance loci in Arabidopsis thaliana.</title>
        <authorList>
            <person name="Aarts M.G.M."/>
            <person name="te Lintel Hekkert B."/>
            <person name="Holub E.B."/>
            <person name="Beynon J.L."/>
            <person name="Stiekema W.J."/>
            <person name="Pereira A."/>
        </authorList>
    </citation>
    <scope>NUCLEOTIDE SEQUENCE [GENOMIC DNA] OF 453-581 AND 772-901</scope>
</reference>
<dbReference type="EMBL" id="AB015477">
    <property type="protein sequence ID" value="BAB08703.1"/>
    <property type="molecule type" value="Genomic_DNA"/>
</dbReference>
<dbReference type="EMBL" id="CP002688">
    <property type="protein sequence ID" value="AED93968.1"/>
    <property type="molecule type" value="Genomic_DNA"/>
</dbReference>
<dbReference type="EMBL" id="CP002688">
    <property type="protein sequence ID" value="ANM70947.1"/>
    <property type="molecule type" value="Genomic_DNA"/>
</dbReference>
<dbReference type="EMBL" id="AK227013">
    <property type="protein sequence ID" value="BAE99077.1"/>
    <property type="molecule type" value="mRNA"/>
</dbReference>
<dbReference type="EMBL" id="AH006046">
    <property type="protein sequence ID" value="AAC14262.1"/>
    <property type="molecule type" value="Genomic_DNA"/>
</dbReference>
<dbReference type="EMBL" id="AH006046">
    <property type="protein sequence ID" value="AAC14261.1"/>
    <property type="status" value="ALT_FRAME"/>
    <property type="molecule type" value="Genomic_DNA"/>
</dbReference>
<dbReference type="RefSeq" id="NP_001332515.1">
    <property type="nucleotide sequence ID" value="NM_001344104.1"/>
</dbReference>
<dbReference type="RefSeq" id="NP_198395.1">
    <property type="nucleotide sequence ID" value="NM_122936.5"/>
</dbReference>
<dbReference type="SMR" id="Q9FJB5"/>
<dbReference type="FunCoup" id="Q9FJB5">
    <property type="interactions" value="1"/>
</dbReference>
<dbReference type="STRING" id="3702.Q9FJB5"/>
<dbReference type="iPTMnet" id="Q9FJB5"/>
<dbReference type="PaxDb" id="3702-AT5G35450.1"/>
<dbReference type="ProteomicsDB" id="227978"/>
<dbReference type="EnsemblPlants" id="AT5G35450.1">
    <property type="protein sequence ID" value="AT5G35450.1"/>
    <property type="gene ID" value="AT5G35450"/>
</dbReference>
<dbReference type="EnsemblPlants" id="AT5G35450.2">
    <property type="protein sequence ID" value="AT5G35450.2"/>
    <property type="gene ID" value="AT5G35450"/>
</dbReference>
<dbReference type="GeneID" id="833508"/>
<dbReference type="Gramene" id="AT5G35450.1">
    <property type="protein sequence ID" value="AT5G35450.1"/>
    <property type="gene ID" value="AT5G35450"/>
</dbReference>
<dbReference type="Gramene" id="AT5G35450.2">
    <property type="protein sequence ID" value="AT5G35450.2"/>
    <property type="gene ID" value="AT5G35450"/>
</dbReference>
<dbReference type="KEGG" id="ath:AT5G35450"/>
<dbReference type="Araport" id="AT5G35450"/>
<dbReference type="TAIR" id="AT5G35450"/>
<dbReference type="eggNOG" id="KOG4658">
    <property type="taxonomic scope" value="Eukaryota"/>
</dbReference>
<dbReference type="HOGENOM" id="CLU_000837_25_4_1"/>
<dbReference type="InParanoid" id="Q9FJB5"/>
<dbReference type="OMA" id="TSAMMEN"/>
<dbReference type="PhylomeDB" id="Q9FJB5"/>
<dbReference type="PRO" id="PR:Q9FJB5"/>
<dbReference type="Proteomes" id="UP000006548">
    <property type="component" value="Chromosome 5"/>
</dbReference>
<dbReference type="ExpressionAtlas" id="Q9FJB5">
    <property type="expression patterns" value="baseline and differential"/>
</dbReference>
<dbReference type="GO" id="GO:0043531">
    <property type="term" value="F:ADP binding"/>
    <property type="evidence" value="ECO:0007669"/>
    <property type="project" value="InterPro"/>
</dbReference>
<dbReference type="GO" id="GO:0005524">
    <property type="term" value="F:ATP binding"/>
    <property type="evidence" value="ECO:0007669"/>
    <property type="project" value="UniProtKB-KW"/>
</dbReference>
<dbReference type="GO" id="GO:0098542">
    <property type="term" value="P:defense response to other organism"/>
    <property type="evidence" value="ECO:0007669"/>
    <property type="project" value="UniProtKB-ARBA"/>
</dbReference>
<dbReference type="CDD" id="cd14798">
    <property type="entry name" value="RX-CC_like"/>
    <property type="match status" value="1"/>
</dbReference>
<dbReference type="FunFam" id="1.20.5.4130:FF:000002">
    <property type="entry name" value="Disease resistance protein RPP8"/>
    <property type="match status" value="1"/>
</dbReference>
<dbReference type="FunFam" id="3.80.10.10:FF:000940">
    <property type="entry name" value="Disease resistance RPP8-like protein 3"/>
    <property type="match status" value="1"/>
</dbReference>
<dbReference type="FunFam" id="3.40.50.300:FF:001091">
    <property type="entry name" value="Probable disease resistance protein At1g61300"/>
    <property type="match status" value="1"/>
</dbReference>
<dbReference type="FunFam" id="1.10.10.10:FF:000322">
    <property type="entry name" value="Probable disease resistance protein At1g63360"/>
    <property type="match status" value="1"/>
</dbReference>
<dbReference type="FunFam" id="1.10.8.430:FF:000003">
    <property type="entry name" value="Probable disease resistance protein At5g66910"/>
    <property type="match status" value="1"/>
</dbReference>
<dbReference type="Gene3D" id="1.20.5.4130">
    <property type="match status" value="1"/>
</dbReference>
<dbReference type="Gene3D" id="1.10.8.430">
    <property type="entry name" value="Helical domain of apoptotic protease-activating factors"/>
    <property type="match status" value="1"/>
</dbReference>
<dbReference type="Gene3D" id="3.40.50.300">
    <property type="entry name" value="P-loop containing nucleotide triphosphate hydrolases"/>
    <property type="match status" value="1"/>
</dbReference>
<dbReference type="Gene3D" id="3.80.10.10">
    <property type="entry name" value="Ribonuclease Inhibitor"/>
    <property type="match status" value="1"/>
</dbReference>
<dbReference type="Gene3D" id="1.10.10.10">
    <property type="entry name" value="Winged helix-like DNA-binding domain superfamily/Winged helix DNA-binding domain"/>
    <property type="match status" value="1"/>
</dbReference>
<dbReference type="InterPro" id="IPR042197">
    <property type="entry name" value="Apaf_helical"/>
</dbReference>
<dbReference type="InterPro" id="IPR032675">
    <property type="entry name" value="LRR_dom_sf"/>
</dbReference>
<dbReference type="InterPro" id="IPR055414">
    <property type="entry name" value="LRR_R13L4/SHOC2-like"/>
</dbReference>
<dbReference type="InterPro" id="IPR002182">
    <property type="entry name" value="NB-ARC"/>
</dbReference>
<dbReference type="InterPro" id="IPR027417">
    <property type="entry name" value="P-loop_NTPase"/>
</dbReference>
<dbReference type="InterPro" id="IPR038005">
    <property type="entry name" value="RX-like_CC"/>
</dbReference>
<dbReference type="InterPro" id="IPR041118">
    <property type="entry name" value="Rx_N"/>
</dbReference>
<dbReference type="InterPro" id="IPR036388">
    <property type="entry name" value="WH-like_DNA-bd_sf"/>
</dbReference>
<dbReference type="PANTHER" id="PTHR36766:SF40">
    <property type="entry name" value="DISEASE RESISTANCE PROTEIN RGA3"/>
    <property type="match status" value="1"/>
</dbReference>
<dbReference type="PANTHER" id="PTHR36766">
    <property type="entry name" value="PLANT BROAD-SPECTRUM MILDEW RESISTANCE PROTEIN RPW8"/>
    <property type="match status" value="1"/>
</dbReference>
<dbReference type="Pfam" id="PF23598">
    <property type="entry name" value="LRR_14"/>
    <property type="match status" value="1"/>
</dbReference>
<dbReference type="Pfam" id="PF00931">
    <property type="entry name" value="NB-ARC"/>
    <property type="match status" value="1"/>
</dbReference>
<dbReference type="Pfam" id="PF18052">
    <property type="entry name" value="Rx_N"/>
    <property type="match status" value="1"/>
</dbReference>
<dbReference type="Pfam" id="PF23559">
    <property type="entry name" value="WH_DRP"/>
    <property type="match status" value="1"/>
</dbReference>
<dbReference type="PRINTS" id="PR00364">
    <property type="entry name" value="DISEASERSIST"/>
</dbReference>
<dbReference type="SUPFAM" id="SSF52058">
    <property type="entry name" value="L domain-like"/>
    <property type="match status" value="1"/>
</dbReference>
<dbReference type="SUPFAM" id="SSF52540">
    <property type="entry name" value="P-loop containing nucleoside triphosphate hydrolases"/>
    <property type="match status" value="1"/>
</dbReference>
<protein>
    <recommendedName>
        <fullName>Disease resistance RPP8-like protein 3</fullName>
    </recommendedName>
</protein>
<feature type="chain" id="PRO_0000212723" description="Disease resistance RPP8-like protein 3">
    <location>
        <begin position="1"/>
        <end position="901"/>
    </location>
</feature>
<feature type="domain" description="NB-ARC">
    <location>
        <begin position="144"/>
        <end position="453"/>
    </location>
</feature>
<feature type="repeat" description="LRR 1">
    <location>
        <begin position="567"/>
        <end position="591"/>
    </location>
</feature>
<feature type="repeat" description="LRR 2">
    <location>
        <begin position="592"/>
        <end position="615"/>
    </location>
</feature>
<feature type="repeat" description="LRR 3">
    <location>
        <begin position="833"/>
        <end position="858"/>
    </location>
</feature>
<feature type="coiled-coil region" evidence="2">
    <location>
        <begin position="15"/>
        <end position="56"/>
    </location>
</feature>
<feature type="binding site" evidence="2">
    <location>
        <begin position="190"/>
        <end position="197"/>
    </location>
    <ligand>
        <name>ATP</name>
        <dbReference type="ChEBI" id="CHEBI:30616"/>
    </ligand>
</feature>
<feature type="binding site" evidence="2">
    <location>
        <begin position="385"/>
        <end position="392"/>
    </location>
    <ligand>
        <name>ATP</name>
        <dbReference type="ChEBI" id="CHEBI:30616"/>
    </ligand>
</feature>
<feature type="sequence conflict" description="In Ref. 4; AAC14262." evidence="3" ref="4">
    <original>ILDSGEDY</original>
    <variation>DGGGGEND</variation>
    <location>
        <begin position="453"/>
        <end position="460"/>
    </location>
</feature>
<feature type="sequence conflict" description="In Ref. 4; AAC14261." evidence="3" ref="4">
    <original>P</original>
    <variation>L</variation>
    <location>
        <position position="810"/>
    </location>
</feature>
<feature type="sequence conflict" description="In Ref. 4; AAC14261." evidence="3" ref="4">
    <original>E</original>
    <variation>R</variation>
    <location>
        <position position="862"/>
    </location>
</feature>
<gene>
    <name type="primary">RPP8L3</name>
    <name type="ordered locus">At5g35450</name>
    <name type="ORF">K21B8.10</name>
    <name type="ORF">MOK9.3</name>
</gene>
<proteinExistence type="evidence at transcript level"/>
<accession>Q9FJB5</accession>
<accession>O64978</accession>
<accession>O64979</accession>
<accession>Q0WUX1</accession>
<sequence length="901" mass="103767">MAEGVVSFGVQKLWALLNRESERLNGIDEQVDGLKRQLRGLQSLLKDADAKKHGSDRVRNFLEDVKDLVFDAEDIIESYVLNKLRGEGKGVKNHVRRLACFLTDRHKVASDIEGITKRISKVIGEMQSLGIQQQIIDGGRSLSLQDIQREIRQTFPNSSESDLVGVEQSVEELVGPMVEIDNIQVVSISGMGGIGKTTLARQIFHHDLVRRHFDGFAWVCVSQQFTQKHVWQRILQELRPHDGEILQMDEYTIQGKLFQLLETGRYLVVLDDVWKEEDWDRIKEVFPRKRGWKMLLTSRNEGVGLHADPTCLSFRARILNPKESWKLFERIVPRRNETEYEEMEAIGKEMVTYCGGLPLAVKVLGGLLANKHTASEWKRVSENIGAQIVGKSCLDDNSLNSVYRILSLSYEDLPTDLKHCFLYLAHFPEDYKIKTRTLYSYWAAEGIYDGLTILDSGEDYLEELVRRNLVIAEKSNLSWRLKLCQMHDMMREVCISKAKVENFLQIIKVPTSTSTIIAQSPSRSRRLTVHSGKAFHILGHKKKVRSLLVLGLKEDLWIQSASRFQSLPLLRVLDLSSVKFEGGKLPSSIGGLIHLRFLSLHQAVVSHLPSTIRNLKLMLYLNLHVAIGVPVHVPNVLKEMLELRYLSLPLDMHDKTKLELGDLVNLEYLWCFSTQHSSVTDLLRMTKLRFFGVSFSERCTFENLSSSLRQFRKLETLSFIYSRKTYMVDYVGEFVLDFIHLKKLSLGVHLSKIPDQHQLPPHIAHIYLLFCHMEEDPMPILEKLLHLKSVELRRKAFIGRRMVCSKGGFPQLRALQISEQSELEEWIVEEGSMPCLRDLIIHSCEKLEELPDGLKYVTSLKELKIEGMKREWKEKLVGEDYYKVQHIPDVQFFNCDDEQRE</sequence>
<evidence type="ECO:0000250" key="1"/>
<evidence type="ECO:0000255" key="2"/>
<evidence type="ECO:0000305" key="3"/>